<protein>
    <recommendedName>
        <fullName evidence="1">Queuine tRNA-ribosyltransferase</fullName>
        <ecNumber evidence="1">2.4.2.29</ecNumber>
    </recommendedName>
    <alternativeName>
        <fullName evidence="1">Guanine insertion enzyme</fullName>
    </alternativeName>
    <alternativeName>
        <fullName evidence="1">tRNA-guanine transglycosylase</fullName>
    </alternativeName>
</protein>
<proteinExistence type="inferred from homology"/>
<keyword id="KW-0328">Glycosyltransferase</keyword>
<keyword id="KW-0479">Metal-binding</keyword>
<keyword id="KW-0671">Queuosine biosynthesis</keyword>
<keyword id="KW-0808">Transferase</keyword>
<keyword id="KW-0819">tRNA processing</keyword>
<keyword id="KW-0862">Zinc</keyword>
<dbReference type="EC" id="2.4.2.29" evidence="1"/>
<dbReference type="EMBL" id="CP001033">
    <property type="protein sequence ID" value="ACB91277.1"/>
    <property type="molecule type" value="Genomic_DNA"/>
</dbReference>
<dbReference type="RefSeq" id="WP_001285241.1">
    <property type="nucleotide sequence ID" value="NC_010582.1"/>
</dbReference>
<dbReference type="SMR" id="B2IMN3"/>
<dbReference type="KEGG" id="spw:SPCG_2025"/>
<dbReference type="HOGENOM" id="CLU_022060_0_1_9"/>
<dbReference type="UniPathway" id="UPA00392"/>
<dbReference type="GO" id="GO:0005829">
    <property type="term" value="C:cytosol"/>
    <property type="evidence" value="ECO:0007669"/>
    <property type="project" value="TreeGrafter"/>
</dbReference>
<dbReference type="GO" id="GO:0046872">
    <property type="term" value="F:metal ion binding"/>
    <property type="evidence" value="ECO:0007669"/>
    <property type="project" value="UniProtKB-KW"/>
</dbReference>
<dbReference type="GO" id="GO:0008479">
    <property type="term" value="F:tRNA-guanosine(34) queuine transglycosylase activity"/>
    <property type="evidence" value="ECO:0007669"/>
    <property type="project" value="UniProtKB-UniRule"/>
</dbReference>
<dbReference type="GO" id="GO:0008616">
    <property type="term" value="P:queuosine biosynthetic process"/>
    <property type="evidence" value="ECO:0007669"/>
    <property type="project" value="UniProtKB-UniRule"/>
</dbReference>
<dbReference type="GO" id="GO:0002099">
    <property type="term" value="P:tRNA wobble guanine modification"/>
    <property type="evidence" value="ECO:0007669"/>
    <property type="project" value="TreeGrafter"/>
</dbReference>
<dbReference type="GO" id="GO:0101030">
    <property type="term" value="P:tRNA-guanine transglycosylation"/>
    <property type="evidence" value="ECO:0007669"/>
    <property type="project" value="InterPro"/>
</dbReference>
<dbReference type="FunFam" id="3.20.20.105:FF:000001">
    <property type="entry name" value="Queuine tRNA-ribosyltransferase"/>
    <property type="match status" value="1"/>
</dbReference>
<dbReference type="Gene3D" id="3.20.20.105">
    <property type="entry name" value="Queuine tRNA-ribosyltransferase-like"/>
    <property type="match status" value="1"/>
</dbReference>
<dbReference type="HAMAP" id="MF_00168">
    <property type="entry name" value="Q_tRNA_Tgt"/>
    <property type="match status" value="1"/>
</dbReference>
<dbReference type="InterPro" id="IPR050076">
    <property type="entry name" value="ArchSynthase1/Queuine_TRR"/>
</dbReference>
<dbReference type="InterPro" id="IPR004803">
    <property type="entry name" value="TGT"/>
</dbReference>
<dbReference type="InterPro" id="IPR036511">
    <property type="entry name" value="TGT-like_sf"/>
</dbReference>
<dbReference type="InterPro" id="IPR002616">
    <property type="entry name" value="tRNA_ribo_trans-like"/>
</dbReference>
<dbReference type="NCBIfam" id="TIGR00430">
    <property type="entry name" value="Q_tRNA_tgt"/>
    <property type="match status" value="1"/>
</dbReference>
<dbReference type="NCBIfam" id="TIGR00449">
    <property type="entry name" value="tgt_general"/>
    <property type="match status" value="1"/>
</dbReference>
<dbReference type="PANTHER" id="PTHR46499">
    <property type="entry name" value="QUEUINE TRNA-RIBOSYLTRANSFERASE"/>
    <property type="match status" value="1"/>
</dbReference>
<dbReference type="PANTHER" id="PTHR46499:SF1">
    <property type="entry name" value="QUEUINE TRNA-RIBOSYLTRANSFERASE"/>
    <property type="match status" value="1"/>
</dbReference>
<dbReference type="Pfam" id="PF01702">
    <property type="entry name" value="TGT"/>
    <property type="match status" value="1"/>
</dbReference>
<dbReference type="SUPFAM" id="SSF51713">
    <property type="entry name" value="tRNA-guanine transglycosylase"/>
    <property type="match status" value="1"/>
</dbReference>
<reference key="1">
    <citation type="journal article" date="2009" name="BMC Genomics">
        <title>Genome evolution driven by host adaptations results in a more virulent and antimicrobial-resistant Streptococcus pneumoniae serotype 14.</title>
        <authorList>
            <person name="Ding F."/>
            <person name="Tang P."/>
            <person name="Hsu M.-H."/>
            <person name="Cui P."/>
            <person name="Hu S."/>
            <person name="Yu J."/>
            <person name="Chiu C.-H."/>
        </authorList>
    </citation>
    <scope>NUCLEOTIDE SEQUENCE [LARGE SCALE GENOMIC DNA]</scope>
    <source>
        <strain>CGSP14</strain>
    </source>
</reference>
<comment type="function">
    <text evidence="1">Catalyzes the base-exchange of a guanine (G) residue with the queuine precursor 7-aminomethyl-7-deazaguanine (PreQ1) at position 34 (anticodon wobble position) in tRNAs with GU(N) anticodons (tRNA-Asp, -Asn, -His and -Tyr). Catalysis occurs through a double-displacement mechanism. The nucleophile active site attacks the C1' of nucleotide 34 to detach the guanine base from the RNA, forming a covalent enzyme-RNA intermediate. The proton acceptor active site deprotonates the incoming PreQ1, allowing a nucleophilic attack on the C1' of the ribose to form the product. After dissociation, two additional enzymatic reactions on the tRNA convert PreQ1 to queuine (Q), resulting in the hypermodified nucleoside queuosine (7-(((4,5-cis-dihydroxy-2-cyclopenten-1-yl)amino)methyl)-7-deazaguanosine).</text>
</comment>
<comment type="catalytic activity">
    <reaction evidence="1">
        <text>7-aminomethyl-7-carbaguanine + guanosine(34) in tRNA = 7-aminomethyl-7-carbaguanosine(34) in tRNA + guanine</text>
        <dbReference type="Rhea" id="RHEA:24104"/>
        <dbReference type="Rhea" id="RHEA-COMP:10341"/>
        <dbReference type="Rhea" id="RHEA-COMP:10342"/>
        <dbReference type="ChEBI" id="CHEBI:16235"/>
        <dbReference type="ChEBI" id="CHEBI:58703"/>
        <dbReference type="ChEBI" id="CHEBI:74269"/>
        <dbReference type="ChEBI" id="CHEBI:82833"/>
        <dbReference type="EC" id="2.4.2.29"/>
    </reaction>
</comment>
<comment type="cofactor">
    <cofactor evidence="1">
        <name>Zn(2+)</name>
        <dbReference type="ChEBI" id="CHEBI:29105"/>
    </cofactor>
    <text evidence="1">Binds 1 zinc ion per subunit.</text>
</comment>
<comment type="pathway">
    <text evidence="1">tRNA modification; tRNA-queuosine biosynthesis.</text>
</comment>
<comment type="subunit">
    <text evidence="1">Homodimer. Within each dimer, one monomer is responsible for RNA recognition and catalysis, while the other monomer binds to the replacement base PreQ1.</text>
</comment>
<comment type="similarity">
    <text evidence="1">Belongs to the queuine tRNA-ribosyltransferase family.</text>
</comment>
<accession>B2IMN3</accession>
<evidence type="ECO:0000255" key="1">
    <source>
        <dbReference type="HAMAP-Rule" id="MF_00168"/>
    </source>
</evidence>
<name>TGT_STRPS</name>
<sequence>MSDSPIKYRLIKKEKHTGARLGEIITPHGTFPTPMFMPVGTQATVKTQSPEELKEMGSGIILSNTYHLWLRPGDELIARAGGLHKFMNWDQPILTDSGGFQVYSLADSRNITEEGVTFKNHLNGSKMFLSPEKAISIQNNLGSDIMMSFDECPQFYQPYDYVKKSIERTSRWAERGLKAHRRPHDQGLFGIVQGAGFEDLRRQSAHDLVSMDFSGYSIGGLAVGETHEEMNAVLDFTTQLLPENKPRYLMGVGAPDSLIDGVIRGVDMFDCVLPTRIARNGTCMTSQGRLVVKNAQFAEDFTPLDPECDCYTCNNYTRAYLRHLLKADETFGIRLTSYHNLYFLLNLMKQVRQAIMDDNLLEFREYFVEKYGYNKSGRNF</sequence>
<feature type="chain" id="PRO_1000097570" description="Queuine tRNA-ribosyltransferase">
    <location>
        <begin position="1"/>
        <end position="380"/>
    </location>
</feature>
<feature type="region of interest" description="RNA binding" evidence="1">
    <location>
        <begin position="251"/>
        <end position="257"/>
    </location>
</feature>
<feature type="region of interest" description="RNA binding; important for wobble base 34 recognition" evidence="1">
    <location>
        <begin position="275"/>
        <end position="279"/>
    </location>
</feature>
<feature type="active site" description="Proton acceptor" evidence="1">
    <location>
        <position position="96"/>
    </location>
</feature>
<feature type="active site" description="Nucleophile" evidence="1">
    <location>
        <position position="270"/>
    </location>
</feature>
<feature type="binding site" evidence="1">
    <location>
        <begin position="96"/>
        <end position="100"/>
    </location>
    <ligand>
        <name>substrate</name>
    </ligand>
</feature>
<feature type="binding site" evidence="1">
    <location>
        <position position="150"/>
    </location>
    <ligand>
        <name>substrate</name>
    </ligand>
</feature>
<feature type="binding site" evidence="1">
    <location>
        <position position="193"/>
    </location>
    <ligand>
        <name>substrate</name>
    </ligand>
</feature>
<feature type="binding site" evidence="1">
    <location>
        <position position="220"/>
    </location>
    <ligand>
        <name>substrate</name>
    </ligand>
</feature>
<feature type="binding site" evidence="1">
    <location>
        <position position="308"/>
    </location>
    <ligand>
        <name>Zn(2+)</name>
        <dbReference type="ChEBI" id="CHEBI:29105"/>
    </ligand>
</feature>
<feature type="binding site" evidence="1">
    <location>
        <position position="310"/>
    </location>
    <ligand>
        <name>Zn(2+)</name>
        <dbReference type="ChEBI" id="CHEBI:29105"/>
    </ligand>
</feature>
<feature type="binding site" evidence="1">
    <location>
        <position position="313"/>
    </location>
    <ligand>
        <name>Zn(2+)</name>
        <dbReference type="ChEBI" id="CHEBI:29105"/>
    </ligand>
</feature>
<feature type="binding site" evidence="1">
    <location>
        <position position="339"/>
    </location>
    <ligand>
        <name>Zn(2+)</name>
        <dbReference type="ChEBI" id="CHEBI:29105"/>
    </ligand>
</feature>
<gene>
    <name evidence="1" type="primary">tgt</name>
    <name type="ordered locus">SPCG_2025</name>
</gene>
<organism>
    <name type="scientific">Streptococcus pneumoniae (strain CGSP14)</name>
    <dbReference type="NCBI Taxonomy" id="516950"/>
    <lineage>
        <taxon>Bacteria</taxon>
        <taxon>Bacillati</taxon>
        <taxon>Bacillota</taxon>
        <taxon>Bacilli</taxon>
        <taxon>Lactobacillales</taxon>
        <taxon>Streptococcaceae</taxon>
        <taxon>Streptococcus</taxon>
    </lineage>
</organism>